<protein>
    <recommendedName>
        <fullName evidence="1">4-hydroxy-2-oxovalerate aldolase</fullName>
        <shortName evidence="1">HOA</shortName>
        <ecNumber evidence="1">4.1.3.39</ecNumber>
    </recommendedName>
    <alternativeName>
        <fullName evidence="1">4-hydroxy-2-keto-pentanoic acid aldolase</fullName>
    </alternativeName>
    <alternativeName>
        <fullName evidence="1">4-hydroxy-2-oxopentanoate aldolase</fullName>
    </alternativeName>
</protein>
<evidence type="ECO:0000255" key="1">
    <source>
        <dbReference type="HAMAP-Rule" id="MF_01656"/>
    </source>
</evidence>
<feature type="chain" id="PRO_0000387908" description="4-hydroxy-2-oxovalerate aldolase">
    <location>
        <begin position="1"/>
        <end position="342"/>
    </location>
</feature>
<feature type="domain" description="Pyruvate carboxyltransferase" evidence="1">
    <location>
        <begin position="8"/>
        <end position="260"/>
    </location>
</feature>
<feature type="active site" description="Proton acceptor" evidence="1">
    <location>
        <position position="20"/>
    </location>
</feature>
<feature type="binding site" evidence="1">
    <location>
        <begin position="16"/>
        <end position="17"/>
    </location>
    <ligand>
        <name>substrate</name>
    </ligand>
</feature>
<feature type="binding site" evidence="1">
    <location>
        <position position="17"/>
    </location>
    <ligand>
        <name>Mn(2+)</name>
        <dbReference type="ChEBI" id="CHEBI:29035"/>
    </ligand>
</feature>
<feature type="binding site" evidence="1">
    <location>
        <position position="170"/>
    </location>
    <ligand>
        <name>substrate</name>
    </ligand>
</feature>
<feature type="binding site" evidence="1">
    <location>
        <position position="199"/>
    </location>
    <ligand>
        <name>Mn(2+)</name>
        <dbReference type="ChEBI" id="CHEBI:29035"/>
    </ligand>
</feature>
<feature type="binding site" evidence="1">
    <location>
        <position position="199"/>
    </location>
    <ligand>
        <name>substrate</name>
    </ligand>
</feature>
<feature type="binding site" evidence="1">
    <location>
        <position position="201"/>
    </location>
    <ligand>
        <name>Mn(2+)</name>
        <dbReference type="ChEBI" id="CHEBI:29035"/>
    </ligand>
</feature>
<feature type="binding site" evidence="1">
    <location>
        <position position="290"/>
    </location>
    <ligand>
        <name>substrate</name>
    </ligand>
</feature>
<feature type="site" description="Transition state stabilizer" evidence="1">
    <location>
        <position position="16"/>
    </location>
</feature>
<reference key="1">
    <citation type="submission" date="2006-02" db="EMBL/GenBank/DDBJ databases">
        <title>Complete sequence of chromosome of Rhodoferax ferrireducens DSM 15236.</title>
        <authorList>
            <person name="Copeland A."/>
            <person name="Lucas S."/>
            <person name="Lapidus A."/>
            <person name="Barry K."/>
            <person name="Detter J.C."/>
            <person name="Glavina del Rio T."/>
            <person name="Hammon N."/>
            <person name="Israni S."/>
            <person name="Pitluck S."/>
            <person name="Brettin T."/>
            <person name="Bruce D."/>
            <person name="Han C."/>
            <person name="Tapia R."/>
            <person name="Gilna P."/>
            <person name="Kiss H."/>
            <person name="Schmutz J."/>
            <person name="Larimer F."/>
            <person name="Land M."/>
            <person name="Kyrpides N."/>
            <person name="Ivanova N."/>
            <person name="Richardson P."/>
        </authorList>
    </citation>
    <scope>NUCLEOTIDE SEQUENCE [LARGE SCALE GENOMIC DNA]</scope>
    <source>
        <strain>ATCC BAA-621 / DSM 15236 / T118</strain>
    </source>
</reference>
<comment type="catalytic activity">
    <reaction evidence="1">
        <text>(S)-4-hydroxy-2-oxopentanoate = acetaldehyde + pyruvate</text>
        <dbReference type="Rhea" id="RHEA:22624"/>
        <dbReference type="ChEBI" id="CHEBI:15343"/>
        <dbReference type="ChEBI" id="CHEBI:15361"/>
        <dbReference type="ChEBI" id="CHEBI:73143"/>
        <dbReference type="EC" id="4.1.3.39"/>
    </reaction>
</comment>
<comment type="similarity">
    <text evidence="1">Belongs to the 4-hydroxy-2-oxovalerate aldolase family.</text>
</comment>
<sequence>MTVKGKRITVHDMTLRDGMHPKRHQMTLDQMKAVATGLDAAGVPLIEVTHGDGLGGASVNYGFPAHTDEEYLGTVIPLLKLAKVSALLIPGIGTVDHLRMAKDLGVHTIRVATHCTEADVSEQHISLARQLEMDTVGFLMMAHKADSQRLISQARLMESYGANCIYITDSAGYMLPAEVKEKTSAVRAALRPETELGFHGHHNLAMGVANSVVAVESGATRIDAAAAGLGAGAGNTPMEVFIAVCNRMGIATGVDLFKMQDVAEDIVVPMMDHPIRIDRDALILGYAGVYSSFLLFAKRAEKKYGVSAREILIELGRRGMVGGQEDMIEDAAMTMAKARGPI</sequence>
<dbReference type="EC" id="4.1.3.39" evidence="1"/>
<dbReference type="EMBL" id="CP000267">
    <property type="protein sequence ID" value="ABD68206.1"/>
    <property type="molecule type" value="Genomic_DNA"/>
</dbReference>
<dbReference type="RefSeq" id="WP_011462779.1">
    <property type="nucleotide sequence ID" value="NC_007908.1"/>
</dbReference>
<dbReference type="SMR" id="Q221U7"/>
<dbReference type="STRING" id="338969.Rfer_0454"/>
<dbReference type="KEGG" id="rfr:Rfer_0454"/>
<dbReference type="eggNOG" id="COG0119">
    <property type="taxonomic scope" value="Bacteria"/>
</dbReference>
<dbReference type="HOGENOM" id="CLU_049173_0_0_4"/>
<dbReference type="OrthoDB" id="9803573at2"/>
<dbReference type="Proteomes" id="UP000008332">
    <property type="component" value="Chromosome"/>
</dbReference>
<dbReference type="GO" id="GO:0003852">
    <property type="term" value="F:2-isopropylmalate synthase activity"/>
    <property type="evidence" value="ECO:0007669"/>
    <property type="project" value="TreeGrafter"/>
</dbReference>
<dbReference type="GO" id="GO:0008701">
    <property type="term" value="F:4-hydroxy-2-oxovalerate aldolase activity"/>
    <property type="evidence" value="ECO:0007669"/>
    <property type="project" value="UniProtKB-UniRule"/>
</dbReference>
<dbReference type="GO" id="GO:0030145">
    <property type="term" value="F:manganese ion binding"/>
    <property type="evidence" value="ECO:0007669"/>
    <property type="project" value="UniProtKB-UniRule"/>
</dbReference>
<dbReference type="GO" id="GO:0009056">
    <property type="term" value="P:catabolic process"/>
    <property type="evidence" value="ECO:0007669"/>
    <property type="project" value="UniProtKB-KW"/>
</dbReference>
<dbReference type="GO" id="GO:0009098">
    <property type="term" value="P:L-leucine biosynthetic process"/>
    <property type="evidence" value="ECO:0007669"/>
    <property type="project" value="TreeGrafter"/>
</dbReference>
<dbReference type="CDD" id="cd07943">
    <property type="entry name" value="DRE_TIM_HOA"/>
    <property type="match status" value="1"/>
</dbReference>
<dbReference type="Gene3D" id="1.10.8.60">
    <property type="match status" value="1"/>
</dbReference>
<dbReference type="Gene3D" id="3.20.20.70">
    <property type="entry name" value="Aldolase class I"/>
    <property type="match status" value="1"/>
</dbReference>
<dbReference type="HAMAP" id="MF_01656">
    <property type="entry name" value="HOA"/>
    <property type="match status" value="1"/>
</dbReference>
<dbReference type="InterPro" id="IPR050073">
    <property type="entry name" value="2-IPM_HCS-like"/>
</dbReference>
<dbReference type="InterPro" id="IPR017629">
    <property type="entry name" value="4OH_2_O-val_aldolase"/>
</dbReference>
<dbReference type="InterPro" id="IPR013785">
    <property type="entry name" value="Aldolase_TIM"/>
</dbReference>
<dbReference type="InterPro" id="IPR012425">
    <property type="entry name" value="DmpG_comm"/>
</dbReference>
<dbReference type="InterPro" id="IPR035685">
    <property type="entry name" value="DRE_TIM_HOA"/>
</dbReference>
<dbReference type="InterPro" id="IPR000891">
    <property type="entry name" value="PYR_CT"/>
</dbReference>
<dbReference type="NCBIfam" id="TIGR03217">
    <property type="entry name" value="4OH_2_O_val_ald"/>
    <property type="match status" value="1"/>
</dbReference>
<dbReference type="NCBIfam" id="NF006049">
    <property type="entry name" value="PRK08195.1"/>
    <property type="match status" value="1"/>
</dbReference>
<dbReference type="PANTHER" id="PTHR10277:SF9">
    <property type="entry name" value="2-ISOPROPYLMALATE SYNTHASE 1, CHLOROPLASTIC-RELATED"/>
    <property type="match status" value="1"/>
</dbReference>
<dbReference type="PANTHER" id="PTHR10277">
    <property type="entry name" value="HOMOCITRATE SYNTHASE-RELATED"/>
    <property type="match status" value="1"/>
</dbReference>
<dbReference type="Pfam" id="PF07836">
    <property type="entry name" value="DmpG_comm"/>
    <property type="match status" value="1"/>
</dbReference>
<dbReference type="Pfam" id="PF00682">
    <property type="entry name" value="HMGL-like"/>
    <property type="match status" value="1"/>
</dbReference>
<dbReference type="SUPFAM" id="SSF51569">
    <property type="entry name" value="Aldolase"/>
    <property type="match status" value="1"/>
</dbReference>
<dbReference type="SUPFAM" id="SSF89000">
    <property type="entry name" value="post-HMGL domain-like"/>
    <property type="match status" value="1"/>
</dbReference>
<dbReference type="PROSITE" id="PS50991">
    <property type="entry name" value="PYR_CT"/>
    <property type="match status" value="1"/>
</dbReference>
<accession>Q221U7</accession>
<keyword id="KW-0058">Aromatic hydrocarbons catabolism</keyword>
<keyword id="KW-0456">Lyase</keyword>
<keyword id="KW-0464">Manganese</keyword>
<keyword id="KW-0479">Metal-binding</keyword>
<keyword id="KW-1185">Reference proteome</keyword>
<name>HOA_ALBFT</name>
<organism>
    <name type="scientific">Albidiferax ferrireducens (strain ATCC BAA-621 / DSM 15236 / T118)</name>
    <name type="common">Rhodoferax ferrireducens</name>
    <dbReference type="NCBI Taxonomy" id="338969"/>
    <lineage>
        <taxon>Bacteria</taxon>
        <taxon>Pseudomonadati</taxon>
        <taxon>Pseudomonadota</taxon>
        <taxon>Betaproteobacteria</taxon>
        <taxon>Burkholderiales</taxon>
        <taxon>Comamonadaceae</taxon>
        <taxon>Rhodoferax</taxon>
    </lineage>
</organism>
<proteinExistence type="inferred from homology"/>
<gene>
    <name type="ordered locus">Rfer_0454</name>
</gene>